<accession>Q7VJ20</accession>
<dbReference type="EMBL" id="AE017125">
    <property type="protein sequence ID" value="AAP77027.1"/>
    <property type="molecule type" value="Genomic_DNA"/>
</dbReference>
<dbReference type="RefSeq" id="WP_011115272.1">
    <property type="nucleotide sequence ID" value="NC_004917.1"/>
</dbReference>
<dbReference type="SMR" id="Q7VJ20"/>
<dbReference type="STRING" id="235279.HH_0430"/>
<dbReference type="KEGG" id="hhe:HH_0430"/>
<dbReference type="eggNOG" id="COG0355">
    <property type="taxonomic scope" value="Bacteria"/>
</dbReference>
<dbReference type="HOGENOM" id="CLU_084338_2_1_7"/>
<dbReference type="OrthoDB" id="9799969at2"/>
<dbReference type="Proteomes" id="UP000002495">
    <property type="component" value="Chromosome"/>
</dbReference>
<dbReference type="GO" id="GO:0005886">
    <property type="term" value="C:plasma membrane"/>
    <property type="evidence" value="ECO:0007669"/>
    <property type="project" value="UniProtKB-SubCell"/>
</dbReference>
<dbReference type="GO" id="GO:0045259">
    <property type="term" value="C:proton-transporting ATP synthase complex"/>
    <property type="evidence" value="ECO:0007669"/>
    <property type="project" value="UniProtKB-KW"/>
</dbReference>
<dbReference type="GO" id="GO:0005524">
    <property type="term" value="F:ATP binding"/>
    <property type="evidence" value="ECO:0007669"/>
    <property type="project" value="UniProtKB-UniRule"/>
</dbReference>
<dbReference type="GO" id="GO:0046933">
    <property type="term" value="F:proton-transporting ATP synthase activity, rotational mechanism"/>
    <property type="evidence" value="ECO:0007669"/>
    <property type="project" value="UniProtKB-UniRule"/>
</dbReference>
<dbReference type="CDD" id="cd12152">
    <property type="entry name" value="F1-ATPase_delta"/>
    <property type="match status" value="1"/>
</dbReference>
<dbReference type="Gene3D" id="2.60.15.10">
    <property type="entry name" value="F0F1 ATP synthase delta/epsilon subunit, N-terminal"/>
    <property type="match status" value="1"/>
</dbReference>
<dbReference type="HAMAP" id="MF_00530">
    <property type="entry name" value="ATP_synth_epsil_bac"/>
    <property type="match status" value="1"/>
</dbReference>
<dbReference type="InterPro" id="IPR001469">
    <property type="entry name" value="ATP_synth_F1_dsu/esu"/>
</dbReference>
<dbReference type="InterPro" id="IPR020546">
    <property type="entry name" value="ATP_synth_F1_dsu/esu_N"/>
</dbReference>
<dbReference type="InterPro" id="IPR036771">
    <property type="entry name" value="ATPsynth_dsu/esu_N"/>
</dbReference>
<dbReference type="NCBIfam" id="TIGR01216">
    <property type="entry name" value="ATP_synt_epsi"/>
    <property type="match status" value="1"/>
</dbReference>
<dbReference type="PANTHER" id="PTHR13822">
    <property type="entry name" value="ATP SYNTHASE DELTA/EPSILON CHAIN"/>
    <property type="match status" value="1"/>
</dbReference>
<dbReference type="PANTHER" id="PTHR13822:SF10">
    <property type="entry name" value="ATP SYNTHASE EPSILON CHAIN, CHLOROPLASTIC"/>
    <property type="match status" value="1"/>
</dbReference>
<dbReference type="Pfam" id="PF02823">
    <property type="entry name" value="ATP-synt_DE_N"/>
    <property type="match status" value="1"/>
</dbReference>
<dbReference type="SUPFAM" id="SSF51344">
    <property type="entry name" value="Epsilon subunit of F1F0-ATP synthase N-terminal domain"/>
    <property type="match status" value="1"/>
</dbReference>
<name>ATPE_HELHP</name>
<gene>
    <name evidence="1" type="primary">atpC</name>
    <name type="ordered locus">HH_0430</name>
</gene>
<organism>
    <name type="scientific">Helicobacter hepaticus (strain ATCC 51449 / 3B1)</name>
    <dbReference type="NCBI Taxonomy" id="235279"/>
    <lineage>
        <taxon>Bacteria</taxon>
        <taxon>Pseudomonadati</taxon>
        <taxon>Campylobacterota</taxon>
        <taxon>Epsilonproteobacteria</taxon>
        <taxon>Campylobacterales</taxon>
        <taxon>Helicobacteraceae</taxon>
        <taxon>Helicobacter</taxon>
    </lineage>
</organism>
<evidence type="ECO:0000255" key="1">
    <source>
        <dbReference type="HAMAP-Rule" id="MF_00530"/>
    </source>
</evidence>
<comment type="function">
    <text evidence="1">Produces ATP from ADP in the presence of a proton gradient across the membrane.</text>
</comment>
<comment type="subunit">
    <text>F-type ATPases have 2 components, CF(1) - the catalytic core - and CF(0) - the membrane proton channel. CF(1) has five subunits: alpha(3), beta(3), gamma(1), delta(1), epsilon(1). CF(0) has three main subunits: a, b and c.</text>
</comment>
<comment type="subcellular location">
    <subcellularLocation>
        <location evidence="1">Cell inner membrane</location>
        <topology evidence="1">Peripheral membrane protein</topology>
    </subcellularLocation>
</comment>
<comment type="similarity">
    <text evidence="1">Belongs to the ATPase epsilon chain family.</text>
</comment>
<reference key="1">
    <citation type="journal article" date="2003" name="Proc. Natl. Acad. Sci. U.S.A.">
        <title>The complete genome sequence of the carcinogenic bacterium Helicobacter hepaticus.</title>
        <authorList>
            <person name="Suerbaum S."/>
            <person name="Josenhans C."/>
            <person name="Sterzenbach T."/>
            <person name="Drescher B."/>
            <person name="Brandt P."/>
            <person name="Bell M."/>
            <person name="Droege M."/>
            <person name="Fartmann B."/>
            <person name="Fischer H.-P."/>
            <person name="Ge Z."/>
            <person name="Hoerster A."/>
            <person name="Holland R."/>
            <person name="Klein K."/>
            <person name="Koenig J."/>
            <person name="Macko L."/>
            <person name="Mendz G.L."/>
            <person name="Nyakatura G."/>
            <person name="Schauer D.B."/>
            <person name="Shen Z."/>
            <person name="Weber J."/>
            <person name="Frosch M."/>
            <person name="Fox J.G."/>
        </authorList>
    </citation>
    <scope>NUCLEOTIDE SEQUENCE [LARGE SCALE GENOMIC DNA]</scope>
    <source>
        <strain>ATCC 51449 / 3B1</strain>
    </source>
</reference>
<keyword id="KW-0066">ATP synthesis</keyword>
<keyword id="KW-0997">Cell inner membrane</keyword>
<keyword id="KW-1003">Cell membrane</keyword>
<keyword id="KW-0139">CF(1)</keyword>
<keyword id="KW-0375">Hydrogen ion transport</keyword>
<keyword id="KW-0406">Ion transport</keyword>
<keyword id="KW-0472">Membrane</keyword>
<keyword id="KW-1185">Reference proteome</keyword>
<keyword id="KW-0813">Transport</keyword>
<feature type="chain" id="PRO_0000188143" description="ATP synthase epsilon chain">
    <location>
        <begin position="1"/>
        <end position="131"/>
    </location>
</feature>
<protein>
    <recommendedName>
        <fullName evidence="1">ATP synthase epsilon chain</fullName>
    </recommendedName>
    <alternativeName>
        <fullName evidence="1">ATP synthase F1 sector epsilon subunit</fullName>
    </alternativeName>
    <alternativeName>
        <fullName evidence="1">F-ATPase epsilon subunit</fullName>
    </alternativeName>
</protein>
<sequence>MENLTLSIVTPYGSIYNGEVKYVVIPGSEGEFGVFPGHCNLLSLLKVGVIEFENLEGNKGLVAINWGHAQISDTDVNIIADGAVAIAGNTESEIVAAISDAKTLLKEASDDSALFGMVVSRVESDYKNFIK</sequence>
<proteinExistence type="inferred from homology"/>